<dbReference type="EMBL" id="AE005674">
    <property type="protein sequence ID" value="AAN45695.1"/>
    <property type="molecule type" value="Genomic_DNA"/>
</dbReference>
<dbReference type="EMBL" id="AE014073">
    <property type="protein sequence ID" value="AAP19481.1"/>
    <property type="molecule type" value="Genomic_DNA"/>
</dbReference>
<dbReference type="RefSeq" id="NP_709988.1">
    <property type="nucleotide sequence ID" value="NC_004337.2"/>
</dbReference>
<dbReference type="RefSeq" id="WP_000331456.1">
    <property type="nucleotide sequence ID" value="NZ_WPGW01000133.1"/>
</dbReference>
<dbReference type="SMR" id="P69505"/>
<dbReference type="STRING" id="198214.SF4277"/>
<dbReference type="PaxDb" id="198214-SF4277"/>
<dbReference type="GeneID" id="1027781"/>
<dbReference type="GeneID" id="93777612"/>
<dbReference type="KEGG" id="sfl:SF4277"/>
<dbReference type="KEGG" id="sfx:S4542"/>
<dbReference type="PATRIC" id="fig|198214.7.peg.5046"/>
<dbReference type="HOGENOM" id="CLU_076075_2_0_6"/>
<dbReference type="Proteomes" id="UP000001006">
    <property type="component" value="Chromosome"/>
</dbReference>
<dbReference type="Proteomes" id="UP000002673">
    <property type="component" value="Chromosome"/>
</dbReference>
<dbReference type="GO" id="GO:0005737">
    <property type="term" value="C:cytoplasm"/>
    <property type="evidence" value="ECO:0007669"/>
    <property type="project" value="UniProtKB-SubCell"/>
</dbReference>
<dbReference type="GO" id="GO:0046872">
    <property type="term" value="F:metal ion binding"/>
    <property type="evidence" value="ECO:0007669"/>
    <property type="project" value="UniProtKB-KW"/>
</dbReference>
<dbReference type="GO" id="GO:0030091">
    <property type="term" value="P:protein repair"/>
    <property type="evidence" value="ECO:0007669"/>
    <property type="project" value="UniProtKB-UniRule"/>
</dbReference>
<dbReference type="GO" id="GO:0051409">
    <property type="term" value="P:response to nitrosative stress"/>
    <property type="evidence" value="ECO:0007669"/>
    <property type="project" value="UniProtKB-UniRule"/>
</dbReference>
<dbReference type="GO" id="GO:0006979">
    <property type="term" value="P:response to oxidative stress"/>
    <property type="evidence" value="ECO:0007669"/>
    <property type="project" value="UniProtKB-UniRule"/>
</dbReference>
<dbReference type="CDD" id="cd12108">
    <property type="entry name" value="Hr-like"/>
    <property type="match status" value="1"/>
</dbReference>
<dbReference type="FunFam" id="1.20.120.520:FF:000001">
    <property type="entry name" value="Iron-sulfur cluster repair protein YtfE"/>
    <property type="match status" value="1"/>
</dbReference>
<dbReference type="Gene3D" id="1.20.120.520">
    <property type="entry name" value="nmb1532 protein domain like"/>
    <property type="match status" value="1"/>
</dbReference>
<dbReference type="HAMAP" id="MF_01606">
    <property type="entry name" value="RIC_YtfE"/>
    <property type="match status" value="1"/>
</dbReference>
<dbReference type="InterPro" id="IPR023742">
    <property type="entry name" value="FeS-repair_YftE"/>
</dbReference>
<dbReference type="InterPro" id="IPR012312">
    <property type="entry name" value="Hemerythrin-like"/>
</dbReference>
<dbReference type="InterPro" id="IPR019903">
    <property type="entry name" value="RIC_family"/>
</dbReference>
<dbReference type="NCBIfam" id="TIGR03652">
    <property type="entry name" value="FeS_repair_RIC"/>
    <property type="match status" value="1"/>
</dbReference>
<dbReference type="NCBIfam" id="NF008221">
    <property type="entry name" value="PRK10992.1"/>
    <property type="match status" value="1"/>
</dbReference>
<dbReference type="PANTHER" id="PTHR36438">
    <property type="entry name" value="IRON-SULFUR CLUSTER REPAIR PROTEIN YTFE"/>
    <property type="match status" value="1"/>
</dbReference>
<dbReference type="PANTHER" id="PTHR36438:SF1">
    <property type="entry name" value="IRON-SULFUR CLUSTER REPAIR PROTEIN YTFE"/>
    <property type="match status" value="1"/>
</dbReference>
<dbReference type="Pfam" id="PF01814">
    <property type="entry name" value="Hemerythrin"/>
    <property type="match status" value="1"/>
</dbReference>
<dbReference type="Pfam" id="PF04405">
    <property type="entry name" value="ScdA_N"/>
    <property type="match status" value="1"/>
</dbReference>
<sequence>MAYRDQPLGELALSIPRASALFRKYDMDYCCGGKQTLARAAARKELDVEVIEAELAKLAEQPIEKDWRSAPLAEIIDHIIVRYHDRHREQLPELILQATKVERVHADKPSVPKGLTKYLTMLHEELSSHMMKEEQILFPMIKQGMGSQAMGPISVMESEHDEAGELLEVIKHTTNNVTPPPEACTTWKAMYNGINELIDDLMDHISLENNVLFPRALAGE</sequence>
<comment type="function">
    <text evidence="1">Di-iron-containing protein involved in the repair of iron-sulfur clusters damaged by oxidative and nitrosative stress conditions.</text>
</comment>
<comment type="subunit">
    <text evidence="1">Homodimer.</text>
</comment>
<comment type="subcellular location">
    <subcellularLocation>
        <location evidence="1">Cytoplasm</location>
    </subcellularLocation>
</comment>
<comment type="similarity">
    <text evidence="1">Belongs to the RIC family. YtfE subfamily.</text>
</comment>
<proteinExistence type="inferred from homology"/>
<reference key="1">
    <citation type="journal article" date="2002" name="Nucleic Acids Res.">
        <title>Genome sequence of Shigella flexneri 2a: insights into pathogenicity through comparison with genomes of Escherichia coli K12 and O157.</title>
        <authorList>
            <person name="Jin Q."/>
            <person name="Yuan Z."/>
            <person name="Xu J."/>
            <person name="Wang Y."/>
            <person name="Shen Y."/>
            <person name="Lu W."/>
            <person name="Wang J."/>
            <person name="Liu H."/>
            <person name="Yang J."/>
            <person name="Yang F."/>
            <person name="Zhang X."/>
            <person name="Zhang J."/>
            <person name="Yang G."/>
            <person name="Wu H."/>
            <person name="Qu D."/>
            <person name="Dong J."/>
            <person name="Sun L."/>
            <person name="Xue Y."/>
            <person name="Zhao A."/>
            <person name="Gao Y."/>
            <person name="Zhu J."/>
            <person name="Kan B."/>
            <person name="Ding K."/>
            <person name="Chen S."/>
            <person name="Cheng H."/>
            <person name="Yao Z."/>
            <person name="He B."/>
            <person name="Chen R."/>
            <person name="Ma D."/>
            <person name="Qiang B."/>
            <person name="Wen Y."/>
            <person name="Hou Y."/>
            <person name="Yu J."/>
        </authorList>
    </citation>
    <scope>NUCLEOTIDE SEQUENCE [LARGE SCALE GENOMIC DNA]</scope>
    <source>
        <strain>301 / Serotype 2a</strain>
    </source>
</reference>
<reference key="2">
    <citation type="journal article" date="2003" name="Infect. Immun.">
        <title>Complete genome sequence and comparative genomics of Shigella flexneri serotype 2a strain 2457T.</title>
        <authorList>
            <person name="Wei J."/>
            <person name="Goldberg M.B."/>
            <person name="Burland V."/>
            <person name="Venkatesan M.M."/>
            <person name="Deng W."/>
            <person name="Fournier G."/>
            <person name="Mayhew G.F."/>
            <person name="Plunkett G. III"/>
            <person name="Rose D.J."/>
            <person name="Darling A."/>
            <person name="Mau B."/>
            <person name="Perna N.T."/>
            <person name="Payne S.M."/>
            <person name="Runyen-Janecky L.J."/>
            <person name="Zhou S."/>
            <person name="Schwartz D.C."/>
            <person name="Blattner F.R."/>
        </authorList>
    </citation>
    <scope>NUCLEOTIDE SEQUENCE [LARGE SCALE GENOMIC DNA]</scope>
    <source>
        <strain>ATCC 700930 / 2457T / Serotype 2a</strain>
    </source>
</reference>
<organism>
    <name type="scientific">Shigella flexneri</name>
    <dbReference type="NCBI Taxonomy" id="623"/>
    <lineage>
        <taxon>Bacteria</taxon>
        <taxon>Pseudomonadati</taxon>
        <taxon>Pseudomonadota</taxon>
        <taxon>Gammaproteobacteria</taxon>
        <taxon>Enterobacterales</taxon>
        <taxon>Enterobacteriaceae</taxon>
        <taxon>Shigella</taxon>
    </lineage>
</organism>
<evidence type="ECO:0000255" key="1">
    <source>
        <dbReference type="HAMAP-Rule" id="MF_01606"/>
    </source>
</evidence>
<keyword id="KW-0963">Cytoplasm</keyword>
<keyword id="KW-0408">Iron</keyword>
<keyword id="KW-0479">Metal-binding</keyword>
<keyword id="KW-1185">Reference proteome</keyword>
<keyword id="KW-0346">Stress response</keyword>
<feature type="chain" id="PRO_0000213056" description="Iron-sulfur cluster repair protein YtfE">
    <location>
        <begin position="1"/>
        <end position="220"/>
    </location>
</feature>
<gene>
    <name evidence="1" type="primary">ytfE</name>
    <name type="ordered locus">SF4277</name>
    <name type="ordered locus">S4542</name>
</gene>
<name>YTFE_SHIFL</name>
<protein>
    <recommendedName>
        <fullName evidence="1">Iron-sulfur cluster repair protein YtfE</fullName>
    </recommendedName>
</protein>
<accession>P69505</accession>
<accession>P39313</accession>